<name>PLSB_PSEA8</name>
<proteinExistence type="inferred from homology"/>
<sequence>MPRYPFRRFGFGALRRLLYLWVRSETINQSAFTLKIDRSKPVLYVLQQPSVSDLAVVDTECRKAGLPRPVMPVAVGDAIEPAAFFYLTPEPDWLGRQDKRGASPTLVRMLAAVGQNGLDDAQIIPVSVFWGQSPDSESSPWKLLFADNWAVTGRLRKLARILILGRKTRVQFSAPIHLRELVEQGKGHERTLRMVNRILRVHFRNLKTAVIGPDLSHRRNLVKGLLRAPLVRQAISEECESERISQEKAEGIALRYANEIASDFSYPVIRFLEVILSWFWNKLYEGVKVNHIERVQDVAQGNEIVYVPCHRSHIDYLLLSYLLFRNGLTPPHIAAGINLNMPVIGSILRRGGAFFMRRSFKGNQLYTAVFNEYLHTLFSRGFSTEYFVEGGRSRTGRMLHPRTGMLAITLRSFLRDSRRPIVFVPVYIGYERVLEGRTYLGELRGATKKKESIFDLFKVVGALKQRFGQVWVNFGEPIHLDQFLDRHQPDWQDQDLGPEYRPDWLPQTTNLLAKDVARHLNDAAAINPVNLVALALLSTSRQALDESALARILDLYLALLRKVPYSPSATLPDGDGQALIEYVKSMNLLAEQKDALGRILYLDEQNAVLATYYRNNVLHVFALPALIASFFQSNSRISREQLLRFARALYPYLQAELFIRWSLDELDAVIDQWLAALVEQDLLRQENDTFIRPAPSSRQYVLLILLARSVTQTLQRFYMAIALLLNAGQNALTAEELENLCTVMAQRLSILHGLNAPEFFDKSLFRHFIQTLLDLRVLRKDEAGKLSYHELLGELAEGAAKRVLPAEIRLSIRQVALERPAEEAAAESNDAAAN</sequence>
<reference key="1">
    <citation type="journal article" date="2009" name="Genome Res.">
        <title>Newly introduced genomic prophage islands are critical determinants of in vivo competitiveness in the Liverpool epidemic strain of Pseudomonas aeruginosa.</title>
        <authorList>
            <person name="Winstanley C."/>
            <person name="Langille M.G.I."/>
            <person name="Fothergill J.L."/>
            <person name="Kukavica-Ibrulj I."/>
            <person name="Paradis-Bleau C."/>
            <person name="Sanschagrin F."/>
            <person name="Thomson N.R."/>
            <person name="Winsor G.L."/>
            <person name="Quail M.A."/>
            <person name="Lennard N."/>
            <person name="Bignell A."/>
            <person name="Clarke L."/>
            <person name="Seeger K."/>
            <person name="Saunders D."/>
            <person name="Harris D."/>
            <person name="Parkhill J."/>
            <person name="Hancock R.E.W."/>
            <person name="Brinkman F.S.L."/>
            <person name="Levesque R.C."/>
        </authorList>
    </citation>
    <scope>NUCLEOTIDE SEQUENCE [LARGE SCALE GENOMIC DNA]</scope>
    <source>
        <strain>LESB58</strain>
    </source>
</reference>
<accession>B7V2U0</accession>
<feature type="chain" id="PRO_1000123087" description="Glycerol-3-phosphate acyltransferase">
    <location>
        <begin position="1"/>
        <end position="834"/>
    </location>
</feature>
<feature type="short sequence motif" description="HXXXXD motif">
    <location>
        <begin position="309"/>
        <end position="314"/>
    </location>
</feature>
<dbReference type="EC" id="2.3.1.15" evidence="1"/>
<dbReference type="EMBL" id="FM209186">
    <property type="protein sequence ID" value="CAW26038.1"/>
    <property type="molecule type" value="Genomic_DNA"/>
</dbReference>
<dbReference type="RefSeq" id="WP_003113856.1">
    <property type="nucleotide sequence ID" value="NC_011770.1"/>
</dbReference>
<dbReference type="SMR" id="B7V2U0"/>
<dbReference type="KEGG" id="pag:PLES_13111"/>
<dbReference type="HOGENOM" id="CLU_015407_0_0_6"/>
<dbReference type="UniPathway" id="UPA00557">
    <property type="reaction ID" value="UER00612"/>
</dbReference>
<dbReference type="GO" id="GO:0005886">
    <property type="term" value="C:plasma membrane"/>
    <property type="evidence" value="ECO:0007669"/>
    <property type="project" value="UniProtKB-SubCell"/>
</dbReference>
<dbReference type="GO" id="GO:0004366">
    <property type="term" value="F:glycerol-3-phosphate O-acyltransferase activity"/>
    <property type="evidence" value="ECO:0007669"/>
    <property type="project" value="UniProtKB-UniRule"/>
</dbReference>
<dbReference type="GO" id="GO:0016024">
    <property type="term" value="P:CDP-diacylglycerol biosynthetic process"/>
    <property type="evidence" value="ECO:0007669"/>
    <property type="project" value="UniProtKB-UniRule"/>
</dbReference>
<dbReference type="GO" id="GO:0006631">
    <property type="term" value="P:fatty acid metabolic process"/>
    <property type="evidence" value="ECO:0007669"/>
    <property type="project" value="TreeGrafter"/>
</dbReference>
<dbReference type="CDD" id="cd07993">
    <property type="entry name" value="LPLAT_DHAPAT-like"/>
    <property type="match status" value="1"/>
</dbReference>
<dbReference type="HAMAP" id="MF_00393">
    <property type="entry name" value="Glyc3P_acyltrans"/>
    <property type="match status" value="1"/>
</dbReference>
<dbReference type="InterPro" id="IPR022284">
    <property type="entry name" value="GPAT/DHAPAT"/>
</dbReference>
<dbReference type="InterPro" id="IPR045520">
    <property type="entry name" value="GPAT/DHAPAT_C"/>
</dbReference>
<dbReference type="InterPro" id="IPR041728">
    <property type="entry name" value="GPAT/DHAPAT_LPLAT"/>
</dbReference>
<dbReference type="InterPro" id="IPR028354">
    <property type="entry name" value="GPAT_PlsB"/>
</dbReference>
<dbReference type="InterPro" id="IPR002123">
    <property type="entry name" value="Plipid/glycerol_acylTrfase"/>
</dbReference>
<dbReference type="NCBIfam" id="TIGR03703">
    <property type="entry name" value="plsB"/>
    <property type="match status" value="1"/>
</dbReference>
<dbReference type="NCBIfam" id="NF003441">
    <property type="entry name" value="PRK04974.1"/>
    <property type="match status" value="1"/>
</dbReference>
<dbReference type="PANTHER" id="PTHR12563:SF17">
    <property type="entry name" value="DIHYDROXYACETONE PHOSPHATE ACYLTRANSFERASE"/>
    <property type="match status" value="1"/>
</dbReference>
<dbReference type="PANTHER" id="PTHR12563">
    <property type="entry name" value="GLYCEROL-3-PHOSPHATE ACYLTRANSFERASE"/>
    <property type="match status" value="1"/>
</dbReference>
<dbReference type="Pfam" id="PF01553">
    <property type="entry name" value="Acyltransferase"/>
    <property type="match status" value="1"/>
</dbReference>
<dbReference type="Pfam" id="PF19277">
    <property type="entry name" value="GPAT_C"/>
    <property type="match status" value="1"/>
</dbReference>
<dbReference type="PIRSF" id="PIRSF500064">
    <property type="entry name" value="GPAT"/>
    <property type="match status" value="1"/>
</dbReference>
<dbReference type="PIRSF" id="PIRSF000437">
    <property type="entry name" value="GPAT_DHAPAT"/>
    <property type="match status" value="1"/>
</dbReference>
<dbReference type="SMART" id="SM00563">
    <property type="entry name" value="PlsC"/>
    <property type="match status" value="1"/>
</dbReference>
<dbReference type="SUPFAM" id="SSF69593">
    <property type="entry name" value="Glycerol-3-phosphate (1)-acyltransferase"/>
    <property type="match status" value="1"/>
</dbReference>
<comment type="catalytic activity">
    <reaction evidence="1">
        <text>sn-glycerol 3-phosphate + an acyl-CoA = a 1-acyl-sn-glycero-3-phosphate + CoA</text>
        <dbReference type="Rhea" id="RHEA:15325"/>
        <dbReference type="ChEBI" id="CHEBI:57287"/>
        <dbReference type="ChEBI" id="CHEBI:57597"/>
        <dbReference type="ChEBI" id="CHEBI:57970"/>
        <dbReference type="ChEBI" id="CHEBI:58342"/>
        <dbReference type="EC" id="2.3.1.15"/>
    </reaction>
</comment>
<comment type="pathway">
    <text evidence="1">Phospholipid metabolism; CDP-diacylglycerol biosynthesis; CDP-diacylglycerol from sn-glycerol 3-phosphate: step 1/3.</text>
</comment>
<comment type="subcellular location">
    <subcellularLocation>
        <location evidence="1">Cell inner membrane</location>
        <topology evidence="1">Peripheral membrane protein</topology>
        <orientation evidence="1">Cytoplasmic side</orientation>
    </subcellularLocation>
</comment>
<comment type="domain">
    <text evidence="1">The HXXXXD motif is essential for acyltransferase activity and may constitute the binding site for the phosphate moiety of the glycerol-3-phosphate.</text>
</comment>
<comment type="similarity">
    <text evidence="1">Belongs to the GPAT/DAPAT family.</text>
</comment>
<gene>
    <name evidence="1" type="primary">plsB</name>
    <name type="ordered locus">PLES_13111</name>
</gene>
<protein>
    <recommendedName>
        <fullName evidence="1">Glycerol-3-phosphate acyltransferase</fullName>
        <shortName evidence="1">GPAT</shortName>
        <ecNumber evidence="1">2.3.1.15</ecNumber>
    </recommendedName>
</protein>
<organism>
    <name type="scientific">Pseudomonas aeruginosa (strain LESB58)</name>
    <dbReference type="NCBI Taxonomy" id="557722"/>
    <lineage>
        <taxon>Bacteria</taxon>
        <taxon>Pseudomonadati</taxon>
        <taxon>Pseudomonadota</taxon>
        <taxon>Gammaproteobacteria</taxon>
        <taxon>Pseudomonadales</taxon>
        <taxon>Pseudomonadaceae</taxon>
        <taxon>Pseudomonas</taxon>
    </lineage>
</organism>
<keyword id="KW-0012">Acyltransferase</keyword>
<keyword id="KW-0997">Cell inner membrane</keyword>
<keyword id="KW-1003">Cell membrane</keyword>
<keyword id="KW-0444">Lipid biosynthesis</keyword>
<keyword id="KW-0443">Lipid metabolism</keyword>
<keyword id="KW-0472">Membrane</keyword>
<keyword id="KW-0594">Phospholipid biosynthesis</keyword>
<keyword id="KW-1208">Phospholipid metabolism</keyword>
<keyword id="KW-0808">Transferase</keyword>
<evidence type="ECO:0000255" key="1">
    <source>
        <dbReference type="HAMAP-Rule" id="MF_00393"/>
    </source>
</evidence>